<reference key="1">
    <citation type="journal article" date="2002" name="Science">
        <title>50 million years of genomic stasis in endosymbiotic bacteria.</title>
        <authorList>
            <person name="Tamas I."/>
            <person name="Klasson L."/>
            <person name="Canbaeck B."/>
            <person name="Naeslund A.K."/>
            <person name="Eriksson A.-S."/>
            <person name="Wernegreen J.J."/>
            <person name="Sandstroem J.P."/>
            <person name="Moran N.A."/>
            <person name="Andersson S.G.E."/>
        </authorList>
    </citation>
    <scope>NUCLEOTIDE SEQUENCE [LARGE SCALE GENOMIC DNA]</scope>
    <source>
        <strain>Sg</strain>
    </source>
</reference>
<dbReference type="EMBL" id="AE013218">
    <property type="protein sequence ID" value="AAM68027.1"/>
    <property type="molecule type" value="Genomic_DNA"/>
</dbReference>
<dbReference type="RefSeq" id="WP_011053993.1">
    <property type="nucleotide sequence ID" value="NC_004061.1"/>
</dbReference>
<dbReference type="SMR" id="Q8K970"/>
<dbReference type="STRING" id="198804.BUsg_484"/>
<dbReference type="GeneID" id="93003959"/>
<dbReference type="KEGG" id="bas:BUsg_484"/>
<dbReference type="eggNOG" id="COG0257">
    <property type="taxonomic scope" value="Bacteria"/>
</dbReference>
<dbReference type="HOGENOM" id="CLU_135723_6_2_6"/>
<dbReference type="Proteomes" id="UP000000416">
    <property type="component" value="Chromosome"/>
</dbReference>
<dbReference type="GO" id="GO:0005737">
    <property type="term" value="C:cytoplasm"/>
    <property type="evidence" value="ECO:0007669"/>
    <property type="project" value="UniProtKB-ARBA"/>
</dbReference>
<dbReference type="GO" id="GO:1990904">
    <property type="term" value="C:ribonucleoprotein complex"/>
    <property type="evidence" value="ECO:0007669"/>
    <property type="project" value="UniProtKB-KW"/>
</dbReference>
<dbReference type="GO" id="GO:0005840">
    <property type="term" value="C:ribosome"/>
    <property type="evidence" value="ECO:0007669"/>
    <property type="project" value="UniProtKB-KW"/>
</dbReference>
<dbReference type="GO" id="GO:0003735">
    <property type="term" value="F:structural constituent of ribosome"/>
    <property type="evidence" value="ECO:0007669"/>
    <property type="project" value="InterPro"/>
</dbReference>
<dbReference type="GO" id="GO:0006412">
    <property type="term" value="P:translation"/>
    <property type="evidence" value="ECO:0007669"/>
    <property type="project" value="UniProtKB-UniRule"/>
</dbReference>
<dbReference type="HAMAP" id="MF_00251">
    <property type="entry name" value="Ribosomal_bL36"/>
    <property type="match status" value="1"/>
</dbReference>
<dbReference type="InterPro" id="IPR000473">
    <property type="entry name" value="Ribosomal_bL36"/>
</dbReference>
<dbReference type="InterPro" id="IPR035977">
    <property type="entry name" value="Ribosomal_bL36_sp"/>
</dbReference>
<dbReference type="NCBIfam" id="TIGR01022">
    <property type="entry name" value="rpmJ_bact"/>
    <property type="match status" value="1"/>
</dbReference>
<dbReference type="PANTHER" id="PTHR42888">
    <property type="entry name" value="50S RIBOSOMAL PROTEIN L36, CHLOROPLASTIC"/>
    <property type="match status" value="1"/>
</dbReference>
<dbReference type="PANTHER" id="PTHR42888:SF1">
    <property type="entry name" value="LARGE RIBOSOMAL SUBUNIT PROTEIN BL36C"/>
    <property type="match status" value="1"/>
</dbReference>
<dbReference type="Pfam" id="PF00444">
    <property type="entry name" value="Ribosomal_L36"/>
    <property type="match status" value="1"/>
</dbReference>
<dbReference type="SUPFAM" id="SSF57840">
    <property type="entry name" value="Ribosomal protein L36"/>
    <property type="match status" value="1"/>
</dbReference>
<dbReference type="PROSITE" id="PS00828">
    <property type="entry name" value="RIBOSOMAL_L36"/>
    <property type="match status" value="1"/>
</dbReference>
<keyword id="KW-0687">Ribonucleoprotein</keyword>
<keyword id="KW-0689">Ribosomal protein</keyword>
<gene>
    <name evidence="1" type="primary">rpmJ</name>
    <name type="ordered locus">BUsg_484</name>
</gene>
<accession>Q8K970</accession>
<evidence type="ECO:0000255" key="1">
    <source>
        <dbReference type="HAMAP-Rule" id="MF_00251"/>
    </source>
</evidence>
<evidence type="ECO:0000305" key="2"/>
<organism>
    <name type="scientific">Buchnera aphidicola subsp. Schizaphis graminum (strain Sg)</name>
    <dbReference type="NCBI Taxonomy" id="198804"/>
    <lineage>
        <taxon>Bacteria</taxon>
        <taxon>Pseudomonadati</taxon>
        <taxon>Pseudomonadota</taxon>
        <taxon>Gammaproteobacteria</taxon>
        <taxon>Enterobacterales</taxon>
        <taxon>Erwiniaceae</taxon>
        <taxon>Buchnera</taxon>
    </lineage>
</organism>
<protein>
    <recommendedName>
        <fullName evidence="1">Large ribosomal subunit protein bL36</fullName>
    </recommendedName>
    <alternativeName>
        <fullName evidence="2">50S ribosomal protein L36</fullName>
    </alternativeName>
</protein>
<comment type="similarity">
    <text evidence="1">Belongs to the bacterial ribosomal protein bL36 family.</text>
</comment>
<sequence length="38" mass="4434">MKVKASVKVLCRNCKIVRRKNVVRVICTNDPKHKQRQG</sequence>
<feature type="chain" id="PRO_0000126162" description="Large ribosomal subunit protein bL36">
    <location>
        <begin position="1"/>
        <end position="38"/>
    </location>
</feature>
<name>RL36_BUCAP</name>
<proteinExistence type="inferred from homology"/>